<name>TTHY_BOVIN</name>
<keyword id="KW-0301">Gamma-carboxyglutamic acid</keyword>
<keyword id="KW-0325">Glycoprotein</keyword>
<keyword id="KW-0372">Hormone</keyword>
<keyword id="KW-0597">Phosphoprotein</keyword>
<keyword id="KW-1185">Reference proteome</keyword>
<keyword id="KW-0964">Secreted</keyword>
<keyword id="KW-0732">Signal</keyword>
<keyword id="KW-0765">Sulfation</keyword>
<keyword id="KW-0795">Thyroid hormone</keyword>
<keyword id="KW-0813">Transport</keyword>
<dbReference type="EMBL" id="AB009591">
    <property type="protein sequence ID" value="BAA23983.1"/>
    <property type="molecule type" value="mRNA"/>
</dbReference>
<dbReference type="EMBL" id="BC103035">
    <property type="protein sequence ID" value="AAI03036.1"/>
    <property type="molecule type" value="mRNA"/>
</dbReference>
<dbReference type="RefSeq" id="NP_776392.1">
    <property type="nucleotide sequence ID" value="NM_173967.3"/>
</dbReference>
<dbReference type="SMR" id="O46375"/>
<dbReference type="FunCoup" id="O46375">
    <property type="interactions" value="441"/>
</dbReference>
<dbReference type="STRING" id="9913.ENSBTAP00000074464"/>
<dbReference type="GlyCosmos" id="O46375">
    <property type="glycosylation" value="1 site, No reported glycans"/>
</dbReference>
<dbReference type="GlyGen" id="O46375">
    <property type="glycosylation" value="1 site"/>
</dbReference>
<dbReference type="PaxDb" id="9913-ENSBTAP00000014585"/>
<dbReference type="PeptideAtlas" id="O46375"/>
<dbReference type="Ensembl" id="ENSBTAT00000014585.5">
    <property type="protein sequence ID" value="ENSBTAP00000014585.3"/>
    <property type="gene ID" value="ENSBTAG00000010991.5"/>
</dbReference>
<dbReference type="GeneID" id="280948"/>
<dbReference type="KEGG" id="bta:280948"/>
<dbReference type="CTD" id="7276"/>
<dbReference type="VEuPathDB" id="HostDB:ENSBTAG00000010991"/>
<dbReference type="VGNC" id="VGNC:36499">
    <property type="gene designation" value="TTR"/>
</dbReference>
<dbReference type="eggNOG" id="KOG3006">
    <property type="taxonomic scope" value="Eukaryota"/>
</dbReference>
<dbReference type="GeneTree" id="ENSGT00940000153229"/>
<dbReference type="HOGENOM" id="CLU_115536_2_0_1"/>
<dbReference type="InParanoid" id="O46375"/>
<dbReference type="OMA" id="AMYKVEL"/>
<dbReference type="OrthoDB" id="10265230at2759"/>
<dbReference type="TreeFam" id="TF300210"/>
<dbReference type="Reactome" id="R-BTA-2453902">
    <property type="pathway name" value="The canonical retinoid cycle in rods (twilight vision)"/>
</dbReference>
<dbReference type="Reactome" id="R-BTA-6798695">
    <property type="pathway name" value="Neutrophil degranulation"/>
</dbReference>
<dbReference type="Reactome" id="R-BTA-975634">
    <property type="pathway name" value="Retinoid metabolism and transport"/>
</dbReference>
<dbReference type="Proteomes" id="UP000009136">
    <property type="component" value="Chromosome 24"/>
</dbReference>
<dbReference type="Bgee" id="ENSBTAG00000010991">
    <property type="expression patterns" value="Expressed in liver and 94 other cell types or tissues"/>
</dbReference>
<dbReference type="GO" id="GO:0005615">
    <property type="term" value="C:extracellular space"/>
    <property type="evidence" value="ECO:0000318"/>
    <property type="project" value="GO_Central"/>
</dbReference>
<dbReference type="GO" id="GO:0005179">
    <property type="term" value="F:hormone activity"/>
    <property type="evidence" value="ECO:0007669"/>
    <property type="project" value="UniProtKB-KW"/>
</dbReference>
<dbReference type="GO" id="GO:0042802">
    <property type="term" value="F:identical protein binding"/>
    <property type="evidence" value="ECO:0007669"/>
    <property type="project" value="Ensembl"/>
</dbReference>
<dbReference type="GO" id="GO:0140313">
    <property type="term" value="F:molecular sequestering activity"/>
    <property type="evidence" value="ECO:0007669"/>
    <property type="project" value="Ensembl"/>
</dbReference>
<dbReference type="GO" id="GO:0003105">
    <property type="term" value="P:negative regulation of glomerular filtration"/>
    <property type="evidence" value="ECO:0007669"/>
    <property type="project" value="Ensembl"/>
</dbReference>
<dbReference type="GO" id="GO:0007603">
    <property type="term" value="P:phototransduction, visible light"/>
    <property type="evidence" value="ECO:0007669"/>
    <property type="project" value="Ensembl"/>
</dbReference>
<dbReference type="GO" id="GO:0006144">
    <property type="term" value="P:purine nucleobase metabolic process"/>
    <property type="evidence" value="ECO:0000318"/>
    <property type="project" value="GO_Central"/>
</dbReference>
<dbReference type="GO" id="GO:0001523">
    <property type="term" value="P:retinoid metabolic process"/>
    <property type="evidence" value="ECO:0007669"/>
    <property type="project" value="Ensembl"/>
</dbReference>
<dbReference type="CDD" id="cd05821">
    <property type="entry name" value="TLP_Transthyretin"/>
    <property type="match status" value="1"/>
</dbReference>
<dbReference type="FunFam" id="2.60.40.180:FF:000002">
    <property type="entry name" value="Transthyretin"/>
    <property type="match status" value="1"/>
</dbReference>
<dbReference type="Gene3D" id="2.60.40.180">
    <property type="entry name" value="Transthyretin/hydroxyisourate hydrolase domain"/>
    <property type="match status" value="1"/>
</dbReference>
<dbReference type="InterPro" id="IPR023418">
    <property type="entry name" value="Thyroxine_BS"/>
</dbReference>
<dbReference type="InterPro" id="IPR000895">
    <property type="entry name" value="Transthyretin/HIU_hydrolase"/>
</dbReference>
<dbReference type="InterPro" id="IPR023416">
    <property type="entry name" value="Transthyretin/HIU_hydrolase_d"/>
</dbReference>
<dbReference type="InterPro" id="IPR036817">
    <property type="entry name" value="Transthyretin/HIU_hydrolase_sf"/>
</dbReference>
<dbReference type="InterPro" id="IPR023419">
    <property type="entry name" value="Transthyretin_CS"/>
</dbReference>
<dbReference type="PANTHER" id="PTHR10395:SF12">
    <property type="entry name" value="TRANSTHYRETIN"/>
    <property type="match status" value="1"/>
</dbReference>
<dbReference type="PANTHER" id="PTHR10395">
    <property type="entry name" value="URICASE AND TRANSTHYRETIN-RELATED"/>
    <property type="match status" value="1"/>
</dbReference>
<dbReference type="Pfam" id="PF00576">
    <property type="entry name" value="Transthyretin"/>
    <property type="match status" value="1"/>
</dbReference>
<dbReference type="PRINTS" id="PR00189">
    <property type="entry name" value="TRNSTHYRETIN"/>
</dbReference>
<dbReference type="SMART" id="SM00095">
    <property type="entry name" value="TR_THY"/>
    <property type="match status" value="1"/>
</dbReference>
<dbReference type="SUPFAM" id="SSF49472">
    <property type="entry name" value="Transthyretin (synonym: prealbumin)"/>
    <property type="match status" value="1"/>
</dbReference>
<dbReference type="PROSITE" id="PS00768">
    <property type="entry name" value="TRANSTHYRETIN_1"/>
    <property type="match status" value="1"/>
</dbReference>
<dbReference type="PROSITE" id="PS00769">
    <property type="entry name" value="TRANSTHYRETIN_2"/>
    <property type="match status" value="1"/>
</dbReference>
<evidence type="ECO:0000250" key="1"/>
<evidence type="ECO:0000250" key="2">
    <source>
        <dbReference type="UniProtKB" id="P02766"/>
    </source>
</evidence>
<evidence type="ECO:0000250" key="3">
    <source>
        <dbReference type="UniProtKB" id="P02767"/>
    </source>
</evidence>
<evidence type="ECO:0000255" key="4"/>
<evidence type="ECO:0000269" key="5">
    <source>
    </source>
</evidence>
<evidence type="ECO:0000305" key="6"/>
<sequence length="147" mass="15727">MASFRLFLLCLAGLVFVSEAGSVGAGEPKCPLMVKVLDAVRGSPAANVGVKVFKKAADETWEPFASGKTSESGELHGLTTEDKFVEGLYKVELDTKSYWKSLGISPFHEFAEVVFTANDSGPRHYTIAALLSPYSYSTTALVSSPKA</sequence>
<reference key="1">
    <citation type="submission" date="1997-12" db="EMBL/GenBank/DDBJ databases">
        <title>Cloning of bovine homolog of transthyretin.</title>
        <authorList>
            <person name="Irikura D."/>
            <person name="Kanaoka Y."/>
            <person name="Urade Y."/>
        </authorList>
    </citation>
    <scope>NUCLEOTIDE SEQUENCE [MRNA]</scope>
    <source>
        <tissue>Brain</tissue>
    </source>
</reference>
<reference key="2">
    <citation type="submission" date="2005-08" db="EMBL/GenBank/DDBJ databases">
        <authorList>
            <consortium name="NIH - Mammalian Gene Collection (MGC) project"/>
        </authorList>
    </citation>
    <scope>NUCLEOTIDE SEQUENCE [LARGE SCALE MRNA]</scope>
    <source>
        <strain>Hereford</strain>
        <tissue>Kidney</tissue>
    </source>
</reference>
<reference key="3">
    <citation type="journal article" date="1989" name="Comp. Biochem. Physiol.">
        <title>Dissociation of the bovine serum retinol-binding protein-transthyretin complex and purification of the two interacting proteins.</title>
        <authorList>
            <person name="Berni R."/>
            <person name="Lamberti V."/>
        </authorList>
    </citation>
    <scope>SUBCELLULAR LOCATION</scope>
    <scope>TISSUE SPECIFICITY</scope>
    <scope>INTERACTION WITH RBP4</scope>
</reference>
<proteinExistence type="evidence at protein level"/>
<organism>
    <name type="scientific">Bos taurus</name>
    <name type="common">Bovine</name>
    <dbReference type="NCBI Taxonomy" id="9913"/>
    <lineage>
        <taxon>Eukaryota</taxon>
        <taxon>Metazoa</taxon>
        <taxon>Chordata</taxon>
        <taxon>Craniata</taxon>
        <taxon>Vertebrata</taxon>
        <taxon>Euteleostomi</taxon>
        <taxon>Mammalia</taxon>
        <taxon>Eutheria</taxon>
        <taxon>Laurasiatheria</taxon>
        <taxon>Artiodactyla</taxon>
        <taxon>Ruminantia</taxon>
        <taxon>Pecora</taxon>
        <taxon>Bovidae</taxon>
        <taxon>Bovinae</taxon>
        <taxon>Bos</taxon>
    </lineage>
</organism>
<protein>
    <recommendedName>
        <fullName>Transthyretin</fullName>
    </recommendedName>
    <alternativeName>
        <fullName>Prealbumin</fullName>
    </alternativeName>
</protein>
<accession>O46375</accession>
<accession>Q3SZ91</accession>
<feature type="signal peptide" evidence="4">
    <location>
        <begin position="1"/>
        <end position="20"/>
    </location>
</feature>
<feature type="chain" id="PRO_0000035753" description="Transthyretin">
    <location>
        <begin position="21"/>
        <end position="147"/>
    </location>
</feature>
<feature type="binding site" evidence="2">
    <location>
        <position position="35"/>
    </location>
    <ligand>
        <name>L-thyroxine</name>
        <dbReference type="ChEBI" id="CHEBI:58448"/>
    </ligand>
</feature>
<feature type="binding site" evidence="2">
    <location>
        <position position="74"/>
    </location>
    <ligand>
        <name>L-thyroxine</name>
        <dbReference type="ChEBI" id="CHEBI:58448"/>
    </ligand>
</feature>
<feature type="binding site" evidence="2">
    <location>
        <position position="137"/>
    </location>
    <ligand>
        <name>L-thyroxine</name>
        <dbReference type="ChEBI" id="CHEBI:58448"/>
    </ligand>
</feature>
<feature type="modified residue" description="Sulfocysteine" evidence="2">
    <location>
        <position position="30"/>
    </location>
</feature>
<feature type="modified residue" description="4-carboxyglutamate" evidence="2">
    <location>
        <position position="62"/>
    </location>
</feature>
<feature type="modified residue" description="Phosphoserine" evidence="3">
    <location>
        <position position="72"/>
    </location>
</feature>
<feature type="glycosylation site" description="N-linked (GlcNAc...) asparagine" evidence="4">
    <location>
        <position position="118"/>
    </location>
</feature>
<gene>
    <name type="primary">TTR</name>
</gene>
<comment type="function">
    <text evidence="1">Thyroid hormone-binding protein. Probably transports thyroxine from the bloodstream to the brain (By similarity).</text>
</comment>
<comment type="subunit">
    <text evidence="5">Homotetramer. Dimer of dimers. In the homotetramer, subunits assemble around a central channel that can accommodate two ligand molecules. Interacts with RBP4.</text>
</comment>
<comment type="subcellular location">
    <subcellularLocation>
        <location evidence="5">Secreted</location>
    </subcellularLocation>
</comment>
<comment type="tissue specificity">
    <text evidence="5">Detected in serum (at protein level).</text>
</comment>
<comment type="PTM">
    <text evidence="2">Sulfonation of the reactive cysteine Cys-30 enhances the stability of the native conformation of TTR, avoiding misassembly of the protein leading to amyloid formation.</text>
</comment>
<comment type="similarity">
    <text evidence="6">Belongs to the transthyretin family.</text>
</comment>